<accession>Q12ZR5</accession>
<dbReference type="EMBL" id="CP000300">
    <property type="protein sequence ID" value="ABE51061.1"/>
    <property type="molecule type" value="Genomic_DNA"/>
</dbReference>
<dbReference type="RefSeq" id="WP_011498225.1">
    <property type="nucleotide sequence ID" value="NC_007955.1"/>
</dbReference>
<dbReference type="SMR" id="Q12ZR5"/>
<dbReference type="STRING" id="259564.Mbur_0037"/>
<dbReference type="GeneID" id="3996901"/>
<dbReference type="KEGG" id="mbu:Mbur_0037"/>
<dbReference type="HOGENOM" id="CLU_089738_1_1_2"/>
<dbReference type="OrthoDB" id="10429at2157"/>
<dbReference type="Proteomes" id="UP000001979">
    <property type="component" value="Chromosome"/>
</dbReference>
<dbReference type="GO" id="GO:0015935">
    <property type="term" value="C:small ribosomal subunit"/>
    <property type="evidence" value="ECO:0007669"/>
    <property type="project" value="InterPro"/>
</dbReference>
<dbReference type="GO" id="GO:0019843">
    <property type="term" value="F:rRNA binding"/>
    <property type="evidence" value="ECO:0007669"/>
    <property type="project" value="UniProtKB-UniRule"/>
</dbReference>
<dbReference type="GO" id="GO:0003735">
    <property type="term" value="F:structural constituent of ribosome"/>
    <property type="evidence" value="ECO:0007669"/>
    <property type="project" value="InterPro"/>
</dbReference>
<dbReference type="GO" id="GO:0042274">
    <property type="term" value="P:ribosomal small subunit biogenesis"/>
    <property type="evidence" value="ECO:0007669"/>
    <property type="project" value="TreeGrafter"/>
</dbReference>
<dbReference type="GO" id="GO:0006412">
    <property type="term" value="P:translation"/>
    <property type="evidence" value="ECO:0007669"/>
    <property type="project" value="UniProtKB-UniRule"/>
</dbReference>
<dbReference type="CDD" id="cd00165">
    <property type="entry name" value="S4"/>
    <property type="match status" value="1"/>
</dbReference>
<dbReference type="FunFam" id="3.10.290.10:FF:000026">
    <property type="entry name" value="30S ribosomal protein S4"/>
    <property type="match status" value="1"/>
</dbReference>
<dbReference type="Gene3D" id="3.10.290.10">
    <property type="entry name" value="RNA-binding S4 domain"/>
    <property type="match status" value="1"/>
</dbReference>
<dbReference type="HAMAP" id="MF_01306_A">
    <property type="entry name" value="Ribosomal_uS4_A"/>
    <property type="match status" value="1"/>
</dbReference>
<dbReference type="InterPro" id="IPR022801">
    <property type="entry name" value="Ribosomal_uS4"/>
</dbReference>
<dbReference type="InterPro" id="IPR022802">
    <property type="entry name" value="Ribosomal_uS4_arc"/>
</dbReference>
<dbReference type="InterPro" id="IPR018079">
    <property type="entry name" value="Ribosomal_uS4_CS"/>
</dbReference>
<dbReference type="InterPro" id="IPR005710">
    <property type="entry name" value="Ribosomal_uS4_euk/arc"/>
</dbReference>
<dbReference type="InterPro" id="IPR001912">
    <property type="entry name" value="Ribosomal_uS4_N"/>
</dbReference>
<dbReference type="InterPro" id="IPR002942">
    <property type="entry name" value="S4_RNA-bd"/>
</dbReference>
<dbReference type="InterPro" id="IPR036986">
    <property type="entry name" value="S4_RNA-bd_sf"/>
</dbReference>
<dbReference type="NCBIfam" id="NF003139">
    <property type="entry name" value="PRK04051.1"/>
    <property type="match status" value="1"/>
</dbReference>
<dbReference type="NCBIfam" id="TIGR01018">
    <property type="entry name" value="uS4_arch"/>
    <property type="match status" value="1"/>
</dbReference>
<dbReference type="PANTHER" id="PTHR11831">
    <property type="entry name" value="30S 40S RIBOSOMAL PROTEIN"/>
    <property type="match status" value="1"/>
</dbReference>
<dbReference type="PANTHER" id="PTHR11831:SF5">
    <property type="entry name" value="40S RIBOSOMAL PROTEIN S9"/>
    <property type="match status" value="1"/>
</dbReference>
<dbReference type="Pfam" id="PF01479">
    <property type="entry name" value="S4"/>
    <property type="match status" value="1"/>
</dbReference>
<dbReference type="SMART" id="SM01390">
    <property type="entry name" value="Ribosomal_S4"/>
    <property type="match status" value="1"/>
</dbReference>
<dbReference type="SMART" id="SM00363">
    <property type="entry name" value="S4"/>
    <property type="match status" value="1"/>
</dbReference>
<dbReference type="SUPFAM" id="SSF55174">
    <property type="entry name" value="Alpha-L RNA-binding motif"/>
    <property type="match status" value="1"/>
</dbReference>
<dbReference type="PROSITE" id="PS00632">
    <property type="entry name" value="RIBOSOMAL_S4"/>
    <property type="match status" value="1"/>
</dbReference>
<dbReference type="PROSITE" id="PS50889">
    <property type="entry name" value="S4"/>
    <property type="match status" value="1"/>
</dbReference>
<sequence>MAYPGKSTKSYDTPQHPWQAERMASEVELVKKYGLRNKRELWKSLSVLRRFRGDARRLLAESAESDLIGHSKTEADQLLTKLIRFSILKSDSNIDDVLGLQTEAILERRLQTQVHRLGLARTARQARQFITHGHIAIDGKRVTVPGMMVTREQEMNVEYYGTSPMTKESHPERPAQIAASVVEE</sequence>
<gene>
    <name evidence="1" type="primary">rps4</name>
    <name type="ordered locus">Mbur_0037</name>
</gene>
<feature type="chain" id="PRO_0000293404" description="Small ribosomal subunit protein uS4">
    <location>
        <begin position="1"/>
        <end position="184"/>
    </location>
</feature>
<feature type="domain" description="S4 RNA-binding" evidence="1">
    <location>
        <begin position="108"/>
        <end position="172"/>
    </location>
</feature>
<feature type="region of interest" description="Disordered" evidence="2">
    <location>
        <begin position="163"/>
        <end position="184"/>
    </location>
</feature>
<name>RS4_METBU</name>
<proteinExistence type="inferred from homology"/>
<organism>
    <name type="scientific">Methanococcoides burtonii (strain DSM 6242 / NBRC 107633 / OCM 468 / ACE-M)</name>
    <dbReference type="NCBI Taxonomy" id="259564"/>
    <lineage>
        <taxon>Archaea</taxon>
        <taxon>Methanobacteriati</taxon>
        <taxon>Methanobacteriota</taxon>
        <taxon>Stenosarchaea group</taxon>
        <taxon>Methanomicrobia</taxon>
        <taxon>Methanosarcinales</taxon>
        <taxon>Methanosarcinaceae</taxon>
        <taxon>Methanococcoides</taxon>
    </lineage>
</organism>
<reference key="1">
    <citation type="journal article" date="2009" name="ISME J.">
        <title>The genome sequence of the psychrophilic archaeon, Methanococcoides burtonii: the role of genome evolution in cold adaptation.</title>
        <authorList>
            <person name="Allen M.A."/>
            <person name="Lauro F.M."/>
            <person name="Williams T.J."/>
            <person name="Burg D."/>
            <person name="Siddiqui K.S."/>
            <person name="De Francisci D."/>
            <person name="Chong K.W."/>
            <person name="Pilak O."/>
            <person name="Chew H.H."/>
            <person name="De Maere M.Z."/>
            <person name="Ting L."/>
            <person name="Katrib M."/>
            <person name="Ng C."/>
            <person name="Sowers K.R."/>
            <person name="Galperin M.Y."/>
            <person name="Anderson I.J."/>
            <person name="Ivanova N."/>
            <person name="Dalin E."/>
            <person name="Martinez M."/>
            <person name="Lapidus A."/>
            <person name="Hauser L."/>
            <person name="Land M."/>
            <person name="Thomas T."/>
            <person name="Cavicchioli R."/>
        </authorList>
    </citation>
    <scope>NUCLEOTIDE SEQUENCE [LARGE SCALE GENOMIC DNA]</scope>
    <source>
        <strain>DSM 6242 / NBRC 107633 / OCM 468 / ACE-M</strain>
    </source>
</reference>
<evidence type="ECO:0000255" key="1">
    <source>
        <dbReference type="HAMAP-Rule" id="MF_01306"/>
    </source>
</evidence>
<evidence type="ECO:0000256" key="2">
    <source>
        <dbReference type="SAM" id="MobiDB-lite"/>
    </source>
</evidence>
<evidence type="ECO:0000305" key="3"/>
<keyword id="KW-0687">Ribonucleoprotein</keyword>
<keyword id="KW-0689">Ribosomal protein</keyword>
<keyword id="KW-0694">RNA-binding</keyword>
<keyword id="KW-0699">rRNA-binding</keyword>
<comment type="function">
    <text evidence="1">One of the primary rRNA binding proteins, it binds directly to 16S rRNA where it nucleates assembly of the body of the 30S subunit.</text>
</comment>
<comment type="function">
    <text evidence="1">With S5 and S12 plays an important role in translational accuracy.</text>
</comment>
<comment type="subunit">
    <text evidence="1">Part of the 30S ribosomal subunit. Contacts protein S5. The interaction surface between S4 and S5 is involved in control of translational fidelity.</text>
</comment>
<comment type="similarity">
    <text evidence="1">Belongs to the universal ribosomal protein uS4 family.</text>
</comment>
<protein>
    <recommendedName>
        <fullName evidence="1">Small ribosomal subunit protein uS4</fullName>
    </recommendedName>
    <alternativeName>
        <fullName evidence="3">30S ribosomal protein S4</fullName>
    </alternativeName>
</protein>